<feature type="chain" id="PRO_0000101509" description="Ribosomal RNA small subunit methyltransferase A">
    <location>
        <begin position="1"/>
        <end position="278"/>
    </location>
</feature>
<feature type="binding site" evidence="1">
    <location>
        <position position="27"/>
    </location>
    <ligand>
        <name>S-adenosyl-L-methionine</name>
        <dbReference type="ChEBI" id="CHEBI:59789"/>
    </ligand>
</feature>
<feature type="binding site" evidence="1">
    <location>
        <position position="29"/>
    </location>
    <ligand>
        <name>S-adenosyl-L-methionine</name>
        <dbReference type="ChEBI" id="CHEBI:59789"/>
    </ligand>
</feature>
<feature type="binding site" evidence="1">
    <location>
        <position position="54"/>
    </location>
    <ligand>
        <name>S-adenosyl-L-methionine</name>
        <dbReference type="ChEBI" id="CHEBI:59789"/>
    </ligand>
</feature>
<feature type="binding site" evidence="1">
    <location>
        <position position="75"/>
    </location>
    <ligand>
        <name>S-adenosyl-L-methionine</name>
        <dbReference type="ChEBI" id="CHEBI:59789"/>
    </ligand>
</feature>
<feature type="binding site" evidence="1">
    <location>
        <position position="95"/>
    </location>
    <ligand>
        <name>S-adenosyl-L-methionine</name>
        <dbReference type="ChEBI" id="CHEBI:59789"/>
    </ligand>
</feature>
<feature type="binding site" evidence="1">
    <location>
        <position position="118"/>
    </location>
    <ligand>
        <name>S-adenosyl-L-methionine</name>
        <dbReference type="ChEBI" id="CHEBI:59789"/>
    </ligand>
</feature>
<organism>
    <name type="scientific">Chlamydia caviae (strain ATCC VR-813 / DSM 19441 / 03DC25 / GPIC)</name>
    <name type="common">Chlamydophila caviae</name>
    <dbReference type="NCBI Taxonomy" id="227941"/>
    <lineage>
        <taxon>Bacteria</taxon>
        <taxon>Pseudomonadati</taxon>
        <taxon>Chlamydiota</taxon>
        <taxon>Chlamydiia</taxon>
        <taxon>Chlamydiales</taxon>
        <taxon>Chlamydiaceae</taxon>
        <taxon>Chlamydia/Chlamydophila group</taxon>
        <taxon>Chlamydia</taxon>
    </lineage>
</organism>
<proteinExistence type="inferred from homology"/>
<sequence length="278" mass="31261">MSRSSPDQLTRFLAQVQGRPKKGLSQNFLIDGNILRKILAVSCVEAGDWVLEIGPGFGALTEVLVNQGAHVVALEKDPMFEETLKQLPIDLEITDACKYPLSQLEEKGWQGKGRVVANLPYHITTPLLTKLFLEVPNQWKTVTVMMQDEVARRITAQPGGKEYGSLTIFLQFFADVRYAFKVSPGCFFPKPQVSSAVVHMTVKETFPLETSLHQKFFSLTRAAFGQRRKLLANALKDLYPKELVFSALNQLNFSEKTRPETLSLNEYLQLFHLLSSNA</sequence>
<comment type="function">
    <text evidence="1">Specifically dimethylates two adjacent adenosines (A1518 and A1519) in the loop of a conserved hairpin near the 3'-end of 16S rRNA in the 30S particle. May play a critical role in biogenesis of 30S subunits.</text>
</comment>
<comment type="catalytic activity">
    <reaction evidence="1">
        <text>adenosine(1518)/adenosine(1519) in 16S rRNA + 4 S-adenosyl-L-methionine = N(6)-dimethyladenosine(1518)/N(6)-dimethyladenosine(1519) in 16S rRNA + 4 S-adenosyl-L-homocysteine + 4 H(+)</text>
        <dbReference type="Rhea" id="RHEA:19609"/>
        <dbReference type="Rhea" id="RHEA-COMP:10232"/>
        <dbReference type="Rhea" id="RHEA-COMP:10233"/>
        <dbReference type="ChEBI" id="CHEBI:15378"/>
        <dbReference type="ChEBI" id="CHEBI:57856"/>
        <dbReference type="ChEBI" id="CHEBI:59789"/>
        <dbReference type="ChEBI" id="CHEBI:74411"/>
        <dbReference type="ChEBI" id="CHEBI:74493"/>
        <dbReference type="EC" id="2.1.1.182"/>
    </reaction>
</comment>
<comment type="subcellular location">
    <subcellularLocation>
        <location evidence="1">Cytoplasm</location>
    </subcellularLocation>
</comment>
<comment type="similarity">
    <text evidence="1">Belongs to the class I-like SAM-binding methyltransferase superfamily. rRNA adenine N(6)-methyltransferase family. RsmA subfamily.</text>
</comment>
<keyword id="KW-0963">Cytoplasm</keyword>
<keyword id="KW-0489">Methyltransferase</keyword>
<keyword id="KW-0694">RNA-binding</keyword>
<keyword id="KW-0698">rRNA processing</keyword>
<keyword id="KW-0949">S-adenosyl-L-methionine</keyword>
<keyword id="KW-0808">Transferase</keyword>
<gene>
    <name evidence="1" type="primary">rsmA</name>
    <name evidence="1" type="synonym">ksgA</name>
    <name type="ordered locus">CCA_00303</name>
</gene>
<accession>Q823V2</accession>
<dbReference type="EC" id="2.1.1.182" evidence="1"/>
<dbReference type="EMBL" id="AE015925">
    <property type="protein sequence ID" value="AAP05052.1"/>
    <property type="molecule type" value="Genomic_DNA"/>
</dbReference>
<dbReference type="RefSeq" id="WP_011006270.1">
    <property type="nucleotide sequence ID" value="NC_003361.3"/>
</dbReference>
<dbReference type="SMR" id="Q823V2"/>
<dbReference type="STRING" id="227941.CCA_00303"/>
<dbReference type="KEGG" id="cca:CCA_00303"/>
<dbReference type="eggNOG" id="COG0030">
    <property type="taxonomic scope" value="Bacteria"/>
</dbReference>
<dbReference type="HOGENOM" id="CLU_041220_0_0_0"/>
<dbReference type="OrthoDB" id="9814755at2"/>
<dbReference type="Proteomes" id="UP000002193">
    <property type="component" value="Chromosome"/>
</dbReference>
<dbReference type="GO" id="GO:0005829">
    <property type="term" value="C:cytosol"/>
    <property type="evidence" value="ECO:0007669"/>
    <property type="project" value="TreeGrafter"/>
</dbReference>
<dbReference type="GO" id="GO:0052908">
    <property type="term" value="F:16S rRNA (adenine(1518)-N(6)/adenine(1519)-N(6))-dimethyltransferase activity"/>
    <property type="evidence" value="ECO:0007669"/>
    <property type="project" value="UniProtKB-EC"/>
</dbReference>
<dbReference type="GO" id="GO:0003723">
    <property type="term" value="F:RNA binding"/>
    <property type="evidence" value="ECO:0007669"/>
    <property type="project" value="UniProtKB-KW"/>
</dbReference>
<dbReference type="CDD" id="cd02440">
    <property type="entry name" value="AdoMet_MTases"/>
    <property type="match status" value="1"/>
</dbReference>
<dbReference type="Gene3D" id="1.10.8.100">
    <property type="entry name" value="Ribosomal RNA adenine dimethylase-like, domain 2"/>
    <property type="match status" value="1"/>
</dbReference>
<dbReference type="Gene3D" id="3.40.50.150">
    <property type="entry name" value="Vaccinia Virus protein VP39"/>
    <property type="match status" value="1"/>
</dbReference>
<dbReference type="HAMAP" id="MF_00607">
    <property type="entry name" value="16SrRNA_methyltr_A"/>
    <property type="match status" value="1"/>
</dbReference>
<dbReference type="InterPro" id="IPR001737">
    <property type="entry name" value="KsgA/Erm"/>
</dbReference>
<dbReference type="InterPro" id="IPR023165">
    <property type="entry name" value="rRNA_Ade_diMease-like_C"/>
</dbReference>
<dbReference type="InterPro" id="IPR020596">
    <property type="entry name" value="rRNA_Ade_Mease_Trfase_CS"/>
</dbReference>
<dbReference type="InterPro" id="IPR020598">
    <property type="entry name" value="rRNA_Ade_methylase_Trfase_N"/>
</dbReference>
<dbReference type="InterPro" id="IPR011530">
    <property type="entry name" value="rRNA_adenine_dimethylase"/>
</dbReference>
<dbReference type="InterPro" id="IPR029063">
    <property type="entry name" value="SAM-dependent_MTases_sf"/>
</dbReference>
<dbReference type="NCBIfam" id="TIGR00755">
    <property type="entry name" value="ksgA"/>
    <property type="match status" value="1"/>
</dbReference>
<dbReference type="PANTHER" id="PTHR11727">
    <property type="entry name" value="DIMETHYLADENOSINE TRANSFERASE"/>
    <property type="match status" value="1"/>
</dbReference>
<dbReference type="PANTHER" id="PTHR11727:SF7">
    <property type="entry name" value="DIMETHYLADENOSINE TRANSFERASE-RELATED"/>
    <property type="match status" value="1"/>
</dbReference>
<dbReference type="Pfam" id="PF00398">
    <property type="entry name" value="RrnaAD"/>
    <property type="match status" value="1"/>
</dbReference>
<dbReference type="SMART" id="SM00650">
    <property type="entry name" value="rADc"/>
    <property type="match status" value="1"/>
</dbReference>
<dbReference type="SUPFAM" id="SSF53335">
    <property type="entry name" value="S-adenosyl-L-methionine-dependent methyltransferases"/>
    <property type="match status" value="1"/>
</dbReference>
<dbReference type="PROSITE" id="PS01131">
    <property type="entry name" value="RRNA_A_DIMETH"/>
    <property type="match status" value="1"/>
</dbReference>
<dbReference type="PROSITE" id="PS51689">
    <property type="entry name" value="SAM_RNA_A_N6_MT"/>
    <property type="match status" value="1"/>
</dbReference>
<evidence type="ECO:0000255" key="1">
    <source>
        <dbReference type="HAMAP-Rule" id="MF_00607"/>
    </source>
</evidence>
<reference key="1">
    <citation type="journal article" date="2003" name="Nucleic Acids Res.">
        <title>Genome sequence of Chlamydophila caviae (Chlamydia psittaci GPIC): examining the role of niche-specific genes in the evolution of the Chlamydiaceae.</title>
        <authorList>
            <person name="Read T.D."/>
            <person name="Myers G.S.A."/>
            <person name="Brunham R.C."/>
            <person name="Nelson W.C."/>
            <person name="Paulsen I.T."/>
            <person name="Heidelberg J.F."/>
            <person name="Holtzapple E.K."/>
            <person name="Khouri H.M."/>
            <person name="Federova N.B."/>
            <person name="Carty H.A."/>
            <person name="Umayam L.A."/>
            <person name="Haft D.H."/>
            <person name="Peterson J.D."/>
            <person name="Beanan M.J."/>
            <person name="White O."/>
            <person name="Salzberg S.L."/>
            <person name="Hsia R.-C."/>
            <person name="McClarty G."/>
            <person name="Rank R.G."/>
            <person name="Bavoil P.M."/>
            <person name="Fraser C.M."/>
        </authorList>
    </citation>
    <scope>NUCLEOTIDE SEQUENCE [LARGE SCALE GENOMIC DNA]</scope>
    <source>
        <strain>ATCC VR-813 / DSM 19441 / 03DC25 / GPIC</strain>
    </source>
</reference>
<name>RSMA_CHLCV</name>
<protein>
    <recommendedName>
        <fullName evidence="1">Ribosomal RNA small subunit methyltransferase A</fullName>
        <ecNumber evidence="1">2.1.1.182</ecNumber>
    </recommendedName>
    <alternativeName>
        <fullName evidence="1">16S rRNA (adenine(1518)-N(6)/adenine(1519)-N(6))-dimethyltransferase</fullName>
    </alternativeName>
    <alternativeName>
        <fullName evidence="1">16S rRNA dimethyladenosine transferase</fullName>
    </alternativeName>
    <alternativeName>
        <fullName evidence="1">16S rRNA dimethylase</fullName>
    </alternativeName>
    <alternativeName>
        <fullName evidence="1">S-adenosylmethionine-6-N', N'-adenosyl(rRNA) dimethyltransferase</fullName>
    </alternativeName>
</protein>